<keyword id="KW-0064">Aspartyl protease</keyword>
<keyword id="KW-0997">Cell inner membrane</keyword>
<keyword id="KW-1003">Cell membrane</keyword>
<keyword id="KW-0378">Hydrolase</keyword>
<keyword id="KW-0472">Membrane</keyword>
<keyword id="KW-0645">Protease</keyword>
<keyword id="KW-1185">Reference proteome</keyword>
<keyword id="KW-0812">Transmembrane</keyword>
<keyword id="KW-1133">Transmembrane helix</keyword>
<sequence>MSKMCSSVEIGDSMIYIFLFLILLIIDQYSKFIVDSTLSVGETVPVIDGFFNLTYVQNRGVAFGLFQGKIDIVSILAVIAIGLILFYFCKNFKKISFLERIAYTMIFSGAIGNMIDRLFRAYVVDMLDFRGIWSFIFNFADVWINIGVVLIIVEHIFFNRKKRVK</sequence>
<organism>
    <name type="scientific">Fusobacterium nucleatum subsp. nucleatum (strain ATCC 25586 / DSM 15643 / BCRC 10681 / CIP 101130 / JCM 8532 / KCTC 2640 / LMG 13131 / VPI 4355)</name>
    <dbReference type="NCBI Taxonomy" id="190304"/>
    <lineage>
        <taxon>Bacteria</taxon>
        <taxon>Fusobacteriati</taxon>
        <taxon>Fusobacteriota</taxon>
        <taxon>Fusobacteriia</taxon>
        <taxon>Fusobacteriales</taxon>
        <taxon>Fusobacteriaceae</taxon>
        <taxon>Fusobacterium</taxon>
    </lineage>
</organism>
<dbReference type="EC" id="3.4.23.36" evidence="1"/>
<dbReference type="EMBL" id="AE009951">
    <property type="protein sequence ID" value="AAL94281.1"/>
    <property type="molecule type" value="Genomic_DNA"/>
</dbReference>
<dbReference type="RefSeq" id="NP_602982.1">
    <property type="nucleotide sequence ID" value="NC_003454.1"/>
</dbReference>
<dbReference type="SMR" id="Q8RH46"/>
<dbReference type="FunCoup" id="Q8RH46">
    <property type="interactions" value="293"/>
</dbReference>
<dbReference type="STRING" id="190304.FN0068"/>
<dbReference type="PaxDb" id="190304-FN0068"/>
<dbReference type="EnsemblBacteria" id="AAL94281">
    <property type="protein sequence ID" value="AAL94281"/>
    <property type="gene ID" value="FN0068"/>
</dbReference>
<dbReference type="KEGG" id="fnu:FN0068"/>
<dbReference type="PATRIC" id="fig|190304.8.peg.660"/>
<dbReference type="eggNOG" id="COG0597">
    <property type="taxonomic scope" value="Bacteria"/>
</dbReference>
<dbReference type="HOGENOM" id="CLU_083252_3_3_0"/>
<dbReference type="InParanoid" id="Q8RH46"/>
<dbReference type="BioCyc" id="FNUC190304:G1FZS-681-MONOMER"/>
<dbReference type="UniPathway" id="UPA00665"/>
<dbReference type="Proteomes" id="UP000002521">
    <property type="component" value="Chromosome"/>
</dbReference>
<dbReference type="GO" id="GO:0005886">
    <property type="term" value="C:plasma membrane"/>
    <property type="evidence" value="ECO:0000318"/>
    <property type="project" value="GO_Central"/>
</dbReference>
<dbReference type="GO" id="GO:0004190">
    <property type="term" value="F:aspartic-type endopeptidase activity"/>
    <property type="evidence" value="ECO:0007669"/>
    <property type="project" value="UniProtKB-UniRule"/>
</dbReference>
<dbReference type="GO" id="GO:0004175">
    <property type="term" value="F:endopeptidase activity"/>
    <property type="evidence" value="ECO:0000318"/>
    <property type="project" value="GO_Central"/>
</dbReference>
<dbReference type="GO" id="GO:0006508">
    <property type="term" value="P:proteolysis"/>
    <property type="evidence" value="ECO:0007669"/>
    <property type="project" value="UniProtKB-KW"/>
</dbReference>
<dbReference type="HAMAP" id="MF_00161">
    <property type="entry name" value="LspA"/>
    <property type="match status" value="1"/>
</dbReference>
<dbReference type="InterPro" id="IPR001872">
    <property type="entry name" value="Peptidase_A8"/>
</dbReference>
<dbReference type="NCBIfam" id="TIGR00077">
    <property type="entry name" value="lspA"/>
    <property type="match status" value="1"/>
</dbReference>
<dbReference type="PANTHER" id="PTHR33695">
    <property type="entry name" value="LIPOPROTEIN SIGNAL PEPTIDASE"/>
    <property type="match status" value="1"/>
</dbReference>
<dbReference type="PANTHER" id="PTHR33695:SF1">
    <property type="entry name" value="LIPOPROTEIN SIGNAL PEPTIDASE"/>
    <property type="match status" value="1"/>
</dbReference>
<dbReference type="Pfam" id="PF01252">
    <property type="entry name" value="Peptidase_A8"/>
    <property type="match status" value="1"/>
</dbReference>
<dbReference type="PRINTS" id="PR00781">
    <property type="entry name" value="LIPOSIGPTASE"/>
</dbReference>
<dbReference type="PROSITE" id="PS00855">
    <property type="entry name" value="SPASE_II"/>
    <property type="match status" value="1"/>
</dbReference>
<reference key="1">
    <citation type="journal article" date="2002" name="J. Bacteriol.">
        <title>Genome sequence and analysis of the oral bacterium Fusobacterium nucleatum strain ATCC 25586.</title>
        <authorList>
            <person name="Kapatral V."/>
            <person name="Anderson I."/>
            <person name="Ivanova N."/>
            <person name="Reznik G."/>
            <person name="Los T."/>
            <person name="Lykidis A."/>
            <person name="Bhattacharyya A."/>
            <person name="Bartman A."/>
            <person name="Gardner W."/>
            <person name="Grechkin G."/>
            <person name="Zhu L."/>
            <person name="Vasieva O."/>
            <person name="Chu L."/>
            <person name="Kogan Y."/>
            <person name="Chaga O."/>
            <person name="Goltsman E."/>
            <person name="Bernal A."/>
            <person name="Larsen N."/>
            <person name="D'Souza M."/>
            <person name="Walunas T."/>
            <person name="Pusch G."/>
            <person name="Haselkorn R."/>
            <person name="Fonstein M."/>
            <person name="Kyrpides N.C."/>
            <person name="Overbeek R."/>
        </authorList>
    </citation>
    <scope>NUCLEOTIDE SEQUENCE [LARGE SCALE GENOMIC DNA]</scope>
    <source>
        <strain>ATCC 25586 / DSM 15643 / BCRC 10681 / CIP 101130 / JCM 8532 / KCTC 2640 / LMG 13131 / VPI 4355</strain>
    </source>
</reference>
<name>LSPA_FUSNN</name>
<evidence type="ECO:0000255" key="1">
    <source>
        <dbReference type="HAMAP-Rule" id="MF_00161"/>
    </source>
</evidence>
<feature type="chain" id="PRO_0000289384" description="Lipoprotein signal peptidase">
    <location>
        <begin position="1"/>
        <end position="165"/>
    </location>
</feature>
<feature type="transmembrane region" description="Helical" evidence="1">
    <location>
        <begin position="6"/>
        <end position="26"/>
    </location>
</feature>
<feature type="transmembrane region" description="Helical" evidence="1">
    <location>
        <begin position="68"/>
        <end position="88"/>
    </location>
</feature>
<feature type="transmembrane region" description="Helical" evidence="1">
    <location>
        <begin position="95"/>
        <end position="115"/>
    </location>
</feature>
<feature type="transmembrane region" description="Helical" evidence="1">
    <location>
        <begin position="132"/>
        <end position="152"/>
    </location>
</feature>
<feature type="active site" evidence="1">
    <location>
        <position position="125"/>
    </location>
</feature>
<feature type="active site" evidence="1">
    <location>
        <position position="141"/>
    </location>
</feature>
<comment type="function">
    <text evidence="1">This protein specifically catalyzes the removal of signal peptides from prolipoproteins.</text>
</comment>
<comment type="catalytic activity">
    <reaction evidence="1">
        <text>Release of signal peptides from bacterial membrane prolipoproteins. Hydrolyzes -Xaa-Yaa-Zaa-|-(S,diacylglyceryl)Cys-, in which Xaa is hydrophobic (preferably Leu), and Yaa (Ala or Ser) and Zaa (Gly or Ala) have small, neutral side chains.</text>
        <dbReference type="EC" id="3.4.23.36"/>
    </reaction>
</comment>
<comment type="pathway">
    <text evidence="1">Protein modification; lipoprotein biosynthesis (signal peptide cleavage).</text>
</comment>
<comment type="subcellular location">
    <subcellularLocation>
        <location evidence="1">Cell inner membrane</location>
        <topology evidence="1">Multi-pass membrane protein</topology>
    </subcellularLocation>
</comment>
<comment type="similarity">
    <text evidence="1">Belongs to the peptidase A8 family.</text>
</comment>
<gene>
    <name evidence="1" type="primary">lspA</name>
    <name type="ordered locus">FN0068</name>
</gene>
<protein>
    <recommendedName>
        <fullName evidence="1">Lipoprotein signal peptidase</fullName>
        <ecNumber evidence="1">3.4.23.36</ecNumber>
    </recommendedName>
    <alternativeName>
        <fullName evidence="1">Prolipoprotein signal peptidase</fullName>
    </alternativeName>
    <alternativeName>
        <fullName evidence="1">Signal peptidase II</fullName>
        <shortName evidence="1">SPase II</shortName>
    </alternativeName>
</protein>
<accession>Q8RH46</accession>
<proteinExistence type="inferred from homology"/>